<comment type="similarity">
    <text evidence="1">Belongs to the UPF0178 family.</text>
</comment>
<reference key="1">
    <citation type="submission" date="2008-07" db="EMBL/GenBank/DDBJ databases">
        <title>Complete sequence of Geobacter bemidjiensis BEM.</title>
        <authorList>
            <consortium name="US DOE Joint Genome Institute"/>
            <person name="Lucas S."/>
            <person name="Copeland A."/>
            <person name="Lapidus A."/>
            <person name="Glavina del Rio T."/>
            <person name="Dalin E."/>
            <person name="Tice H."/>
            <person name="Bruce D."/>
            <person name="Goodwin L."/>
            <person name="Pitluck S."/>
            <person name="Kiss H."/>
            <person name="Brettin T."/>
            <person name="Detter J.C."/>
            <person name="Han C."/>
            <person name="Kuske C.R."/>
            <person name="Schmutz J."/>
            <person name="Larimer F."/>
            <person name="Land M."/>
            <person name="Hauser L."/>
            <person name="Kyrpides N."/>
            <person name="Lykidis A."/>
            <person name="Lovley D."/>
            <person name="Richardson P."/>
        </authorList>
    </citation>
    <scope>NUCLEOTIDE SEQUENCE [LARGE SCALE GENOMIC DNA]</scope>
    <source>
        <strain>ATCC BAA-1014 / DSM 16622 / JCM 12645 / Bem</strain>
    </source>
</reference>
<dbReference type="EMBL" id="CP001124">
    <property type="protein sequence ID" value="ACH39233.1"/>
    <property type="molecule type" value="Genomic_DNA"/>
</dbReference>
<dbReference type="RefSeq" id="WP_012530654.1">
    <property type="nucleotide sequence ID" value="NC_011146.1"/>
</dbReference>
<dbReference type="STRING" id="404380.Gbem_2221"/>
<dbReference type="KEGG" id="gbm:Gbem_2221"/>
<dbReference type="eggNOG" id="COG1671">
    <property type="taxonomic scope" value="Bacteria"/>
</dbReference>
<dbReference type="HOGENOM" id="CLU_106619_2_1_7"/>
<dbReference type="OrthoDB" id="9798918at2"/>
<dbReference type="Proteomes" id="UP000008825">
    <property type="component" value="Chromosome"/>
</dbReference>
<dbReference type="CDD" id="cd18720">
    <property type="entry name" value="PIN_YqxD-like"/>
    <property type="match status" value="1"/>
</dbReference>
<dbReference type="HAMAP" id="MF_00489">
    <property type="entry name" value="UPF0178"/>
    <property type="match status" value="1"/>
</dbReference>
<dbReference type="InterPro" id="IPR003791">
    <property type="entry name" value="UPF0178"/>
</dbReference>
<dbReference type="NCBIfam" id="NF001095">
    <property type="entry name" value="PRK00124.1"/>
    <property type="match status" value="1"/>
</dbReference>
<dbReference type="PANTHER" id="PTHR35146">
    <property type="entry name" value="UPF0178 PROTEIN YAII"/>
    <property type="match status" value="1"/>
</dbReference>
<dbReference type="PANTHER" id="PTHR35146:SF1">
    <property type="entry name" value="UPF0178 PROTEIN YAII"/>
    <property type="match status" value="1"/>
</dbReference>
<dbReference type="Pfam" id="PF02639">
    <property type="entry name" value="DUF188"/>
    <property type="match status" value="1"/>
</dbReference>
<accession>B5EE88</accession>
<protein>
    <recommendedName>
        <fullName evidence="1">UPF0178 protein Gbem_2221</fullName>
    </recommendedName>
</protein>
<proteinExistence type="inferred from homology"/>
<feature type="chain" id="PRO_1000126195" description="UPF0178 protein Gbem_2221">
    <location>
        <begin position="1"/>
        <end position="154"/>
    </location>
</feature>
<gene>
    <name type="ordered locus">Gbem_2221</name>
</gene>
<name>Y2221_CITBB</name>
<keyword id="KW-1185">Reference proteome</keyword>
<sequence>MKIWIDADACPRVVKDIVFRASERLKVPVCLVANTDLSRAHTSLITSVRVKAGFDVADDYIAENAEACDLVITADIPLAARVVEKGGVALDPRGELYTEENVGERLSYRNLMAELRTDGLLVGGPAQLGLTDRNRFASALDRLLTKMVREHRSQ</sequence>
<organism>
    <name type="scientific">Citrifermentans bemidjiense (strain ATCC BAA-1014 / DSM 16622 / JCM 12645 / Bem)</name>
    <name type="common">Geobacter bemidjiensis</name>
    <dbReference type="NCBI Taxonomy" id="404380"/>
    <lineage>
        <taxon>Bacteria</taxon>
        <taxon>Pseudomonadati</taxon>
        <taxon>Thermodesulfobacteriota</taxon>
        <taxon>Desulfuromonadia</taxon>
        <taxon>Geobacterales</taxon>
        <taxon>Geobacteraceae</taxon>
        <taxon>Citrifermentans</taxon>
    </lineage>
</organism>
<evidence type="ECO:0000255" key="1">
    <source>
        <dbReference type="HAMAP-Rule" id="MF_00489"/>
    </source>
</evidence>